<evidence type="ECO:0000255" key="1">
    <source>
        <dbReference type="HAMAP-Rule" id="MF_00073"/>
    </source>
</evidence>
<proteinExistence type="inferred from homology"/>
<feature type="chain" id="PRO_0000176612" description="Transcription antitermination protein NusB">
    <location>
        <begin position="1"/>
        <end position="138"/>
    </location>
</feature>
<sequence length="138" mass="15506">MKPAARRRARECAVQALYSWQLSKNDIADVELQFLSEQDVKDVDIAYFRELLSGVAVNAASLDALMAPFLSRQLEELGQVERAVLRIALFELSKRDDVPYKVAINEAIELAKTFGAEDSHKFVNGVLDKVAPTVRKRK</sequence>
<organism>
    <name type="scientific">Yersinia pestis</name>
    <dbReference type="NCBI Taxonomy" id="632"/>
    <lineage>
        <taxon>Bacteria</taxon>
        <taxon>Pseudomonadati</taxon>
        <taxon>Pseudomonadota</taxon>
        <taxon>Gammaproteobacteria</taxon>
        <taxon>Enterobacterales</taxon>
        <taxon>Yersiniaceae</taxon>
        <taxon>Yersinia</taxon>
    </lineage>
</organism>
<gene>
    <name evidence="1" type="primary">nusB</name>
    <name type="ordered locus">YPO3181</name>
    <name type="ordered locus">y1002</name>
    <name type="ordered locus">YP_0750</name>
</gene>
<name>NUSB_YERPE</name>
<keyword id="KW-1185">Reference proteome</keyword>
<keyword id="KW-0694">RNA-binding</keyword>
<keyword id="KW-0804">Transcription</keyword>
<keyword id="KW-0889">Transcription antitermination</keyword>
<keyword id="KW-0805">Transcription regulation</keyword>
<accession>Q8ZC42</accession>
<accession>Q0WCA2</accession>
<dbReference type="EMBL" id="AL590842">
    <property type="protein sequence ID" value="CAL21776.1"/>
    <property type="molecule type" value="Genomic_DNA"/>
</dbReference>
<dbReference type="EMBL" id="AE009952">
    <property type="protein sequence ID" value="AAM84583.1"/>
    <property type="molecule type" value="Genomic_DNA"/>
</dbReference>
<dbReference type="EMBL" id="AE017042">
    <property type="protein sequence ID" value="AAS61015.1"/>
    <property type="molecule type" value="Genomic_DNA"/>
</dbReference>
<dbReference type="PIR" id="AE0386">
    <property type="entry name" value="AE0386"/>
</dbReference>
<dbReference type="RefSeq" id="WP_002208665.1">
    <property type="nucleotide sequence ID" value="NZ_WUCM01000134.1"/>
</dbReference>
<dbReference type="RefSeq" id="YP_002348086.1">
    <property type="nucleotide sequence ID" value="NC_003143.1"/>
</dbReference>
<dbReference type="SMR" id="Q8ZC42"/>
<dbReference type="STRING" id="214092.YPO3181"/>
<dbReference type="PaxDb" id="214092-YPO3181"/>
<dbReference type="DNASU" id="1145949"/>
<dbReference type="EnsemblBacteria" id="AAS61015">
    <property type="protein sequence ID" value="AAS61015"/>
    <property type="gene ID" value="YP_0750"/>
</dbReference>
<dbReference type="GeneID" id="96664444"/>
<dbReference type="KEGG" id="ype:YPO3181"/>
<dbReference type="KEGG" id="ypk:y1002"/>
<dbReference type="KEGG" id="ypm:YP_0750"/>
<dbReference type="PATRIC" id="fig|214092.21.peg.3637"/>
<dbReference type="eggNOG" id="COG0781">
    <property type="taxonomic scope" value="Bacteria"/>
</dbReference>
<dbReference type="HOGENOM" id="CLU_087843_4_1_6"/>
<dbReference type="OMA" id="DRMPVVD"/>
<dbReference type="OrthoDB" id="9789556at2"/>
<dbReference type="Proteomes" id="UP000000815">
    <property type="component" value="Chromosome"/>
</dbReference>
<dbReference type="Proteomes" id="UP000001019">
    <property type="component" value="Chromosome"/>
</dbReference>
<dbReference type="Proteomes" id="UP000002490">
    <property type="component" value="Chromosome"/>
</dbReference>
<dbReference type="GO" id="GO:0005829">
    <property type="term" value="C:cytosol"/>
    <property type="evidence" value="ECO:0000318"/>
    <property type="project" value="GO_Central"/>
</dbReference>
<dbReference type="GO" id="GO:0003723">
    <property type="term" value="F:RNA binding"/>
    <property type="evidence" value="ECO:0007669"/>
    <property type="project" value="UniProtKB-UniRule"/>
</dbReference>
<dbReference type="GO" id="GO:0006353">
    <property type="term" value="P:DNA-templated transcription termination"/>
    <property type="evidence" value="ECO:0007669"/>
    <property type="project" value="UniProtKB-UniRule"/>
</dbReference>
<dbReference type="GO" id="GO:0031564">
    <property type="term" value="P:transcription antitermination"/>
    <property type="evidence" value="ECO:0007669"/>
    <property type="project" value="UniProtKB-KW"/>
</dbReference>
<dbReference type="CDD" id="cd00619">
    <property type="entry name" value="Terminator_NusB"/>
    <property type="match status" value="1"/>
</dbReference>
<dbReference type="FunFam" id="1.10.940.10:FF:000001">
    <property type="entry name" value="Transcription antitermination factor NusB"/>
    <property type="match status" value="1"/>
</dbReference>
<dbReference type="Gene3D" id="1.10.940.10">
    <property type="entry name" value="NusB-like"/>
    <property type="match status" value="1"/>
</dbReference>
<dbReference type="HAMAP" id="MF_00073">
    <property type="entry name" value="NusB"/>
    <property type="match status" value="1"/>
</dbReference>
<dbReference type="InterPro" id="IPR035926">
    <property type="entry name" value="NusB-like_sf"/>
</dbReference>
<dbReference type="InterPro" id="IPR011605">
    <property type="entry name" value="NusB_fam"/>
</dbReference>
<dbReference type="InterPro" id="IPR006027">
    <property type="entry name" value="NusB_RsmB_TIM44"/>
</dbReference>
<dbReference type="NCBIfam" id="TIGR01951">
    <property type="entry name" value="nusB"/>
    <property type="match status" value="1"/>
</dbReference>
<dbReference type="PANTHER" id="PTHR11078:SF3">
    <property type="entry name" value="ANTITERMINATION NUSB DOMAIN-CONTAINING PROTEIN"/>
    <property type="match status" value="1"/>
</dbReference>
<dbReference type="PANTHER" id="PTHR11078">
    <property type="entry name" value="N UTILIZATION SUBSTANCE PROTEIN B-RELATED"/>
    <property type="match status" value="1"/>
</dbReference>
<dbReference type="Pfam" id="PF01029">
    <property type="entry name" value="NusB"/>
    <property type="match status" value="1"/>
</dbReference>
<dbReference type="SUPFAM" id="SSF48013">
    <property type="entry name" value="NusB-like"/>
    <property type="match status" value="1"/>
</dbReference>
<protein>
    <recommendedName>
        <fullName evidence="1">Transcription antitermination protein NusB</fullName>
    </recommendedName>
    <alternativeName>
        <fullName evidence="1">Antitermination factor NusB</fullName>
    </alternativeName>
</protein>
<reference key="1">
    <citation type="journal article" date="2001" name="Nature">
        <title>Genome sequence of Yersinia pestis, the causative agent of plague.</title>
        <authorList>
            <person name="Parkhill J."/>
            <person name="Wren B.W."/>
            <person name="Thomson N.R."/>
            <person name="Titball R.W."/>
            <person name="Holden M.T.G."/>
            <person name="Prentice M.B."/>
            <person name="Sebaihia M."/>
            <person name="James K.D."/>
            <person name="Churcher C.M."/>
            <person name="Mungall K.L."/>
            <person name="Baker S."/>
            <person name="Basham D."/>
            <person name="Bentley S.D."/>
            <person name="Brooks K."/>
            <person name="Cerdeno-Tarraga A.-M."/>
            <person name="Chillingworth T."/>
            <person name="Cronin A."/>
            <person name="Davies R.M."/>
            <person name="Davis P."/>
            <person name="Dougan G."/>
            <person name="Feltwell T."/>
            <person name="Hamlin N."/>
            <person name="Holroyd S."/>
            <person name="Jagels K."/>
            <person name="Karlyshev A.V."/>
            <person name="Leather S."/>
            <person name="Moule S."/>
            <person name="Oyston P.C.F."/>
            <person name="Quail M.A."/>
            <person name="Rutherford K.M."/>
            <person name="Simmonds M."/>
            <person name="Skelton J."/>
            <person name="Stevens K."/>
            <person name="Whitehead S."/>
            <person name="Barrell B.G."/>
        </authorList>
    </citation>
    <scope>NUCLEOTIDE SEQUENCE [LARGE SCALE GENOMIC DNA]</scope>
    <source>
        <strain>CO-92 / Biovar Orientalis</strain>
    </source>
</reference>
<reference key="2">
    <citation type="journal article" date="2002" name="J. Bacteriol.">
        <title>Genome sequence of Yersinia pestis KIM.</title>
        <authorList>
            <person name="Deng W."/>
            <person name="Burland V."/>
            <person name="Plunkett G. III"/>
            <person name="Boutin A."/>
            <person name="Mayhew G.F."/>
            <person name="Liss P."/>
            <person name="Perna N.T."/>
            <person name="Rose D.J."/>
            <person name="Mau B."/>
            <person name="Zhou S."/>
            <person name="Schwartz D.C."/>
            <person name="Fetherston J.D."/>
            <person name="Lindler L.E."/>
            <person name="Brubaker R.R."/>
            <person name="Plano G.V."/>
            <person name="Straley S.C."/>
            <person name="McDonough K.A."/>
            <person name="Nilles M.L."/>
            <person name="Matson J.S."/>
            <person name="Blattner F.R."/>
            <person name="Perry R.D."/>
        </authorList>
    </citation>
    <scope>NUCLEOTIDE SEQUENCE [LARGE SCALE GENOMIC DNA]</scope>
    <source>
        <strain>KIM10+ / Biovar Mediaevalis</strain>
    </source>
</reference>
<reference key="3">
    <citation type="journal article" date="2004" name="DNA Res.">
        <title>Complete genome sequence of Yersinia pestis strain 91001, an isolate avirulent to humans.</title>
        <authorList>
            <person name="Song Y."/>
            <person name="Tong Z."/>
            <person name="Wang J."/>
            <person name="Wang L."/>
            <person name="Guo Z."/>
            <person name="Han Y."/>
            <person name="Zhang J."/>
            <person name="Pei D."/>
            <person name="Zhou D."/>
            <person name="Qin H."/>
            <person name="Pang X."/>
            <person name="Han Y."/>
            <person name="Zhai J."/>
            <person name="Li M."/>
            <person name="Cui B."/>
            <person name="Qi Z."/>
            <person name="Jin L."/>
            <person name="Dai R."/>
            <person name="Chen F."/>
            <person name="Li S."/>
            <person name="Ye C."/>
            <person name="Du Z."/>
            <person name="Lin W."/>
            <person name="Wang J."/>
            <person name="Yu J."/>
            <person name="Yang H."/>
            <person name="Wang J."/>
            <person name="Huang P."/>
            <person name="Yang R."/>
        </authorList>
    </citation>
    <scope>NUCLEOTIDE SEQUENCE [LARGE SCALE GENOMIC DNA]</scope>
    <source>
        <strain>91001 / Biovar Mediaevalis</strain>
    </source>
</reference>
<comment type="function">
    <text evidence="1">Involved in transcription antitermination. Required for transcription of ribosomal RNA (rRNA) genes. Binds specifically to the boxA antiterminator sequence of the ribosomal RNA (rrn) operons.</text>
</comment>
<comment type="similarity">
    <text evidence="1">Belongs to the NusB family.</text>
</comment>